<feature type="signal peptide" evidence="1">
    <location>
        <begin position="1"/>
        <end position="22"/>
    </location>
</feature>
<feature type="chain" id="PRO_0000023584" description="Complement component C7">
    <location>
        <begin position="23"/>
        <end position="843"/>
    </location>
</feature>
<feature type="domain" description="TSP type-1 1" evidence="4">
    <location>
        <begin position="27"/>
        <end position="80"/>
    </location>
</feature>
<feature type="domain" description="LDL-receptor class A" evidence="3">
    <location>
        <begin position="83"/>
        <end position="121"/>
    </location>
</feature>
<feature type="domain" description="MACPF" evidence="6">
    <location>
        <begin position="124"/>
        <end position="456"/>
    </location>
</feature>
<feature type="domain" description="EGF-like">
    <location>
        <begin position="457"/>
        <end position="487"/>
    </location>
</feature>
<feature type="domain" description="TSP type-1 2" evidence="4">
    <location>
        <begin position="500"/>
        <end position="549"/>
    </location>
</feature>
<feature type="domain" description="Sushi 1" evidence="5">
    <location>
        <begin position="569"/>
        <end position="628"/>
    </location>
</feature>
<feature type="domain" description="Sushi 2" evidence="5">
    <location>
        <begin position="629"/>
        <end position="690"/>
    </location>
</feature>
<feature type="region of interest" description="Disordered" evidence="7">
    <location>
        <begin position="105"/>
        <end position="142"/>
    </location>
</feature>
<feature type="region of interest" description="Disordered" evidence="7">
    <location>
        <begin position="516"/>
        <end position="539"/>
    </location>
</feature>
<feature type="region of interest" description="CCP 1">
    <location>
        <begin position="545"/>
        <end position="615"/>
    </location>
</feature>
<feature type="region of interest" description="CCP 2">
    <location>
        <begin position="616"/>
        <end position="693"/>
    </location>
</feature>
<feature type="region of interest" description="Factor I module (FIM) 1">
    <location>
        <begin position="695"/>
        <end position="770"/>
    </location>
</feature>
<feature type="region of interest" description="Factor I module (FIM) 2">
    <location>
        <begin position="771"/>
        <end position="843"/>
    </location>
</feature>
<feature type="compositionally biased region" description="Acidic residues" evidence="7">
    <location>
        <begin position="107"/>
        <end position="120"/>
    </location>
</feature>
<feature type="glycosylation site" description="C-linked (Man) tryptophan" evidence="1">
    <location>
        <position position="36"/>
    </location>
</feature>
<feature type="glycosylation site" description="N-linked (GlcNAc...) asparagine" evidence="2">
    <location>
        <position position="202"/>
    </location>
</feature>
<feature type="glycosylation site" description="C-linked (Man) tryptophan" evidence="1">
    <location>
        <position position="503"/>
    </location>
</feature>
<feature type="glycosylation site" description="C-linked (Man) tryptophan" evidence="1">
    <location>
        <position position="506"/>
    </location>
</feature>
<feature type="glycosylation site" description="C-linked (Man) tryptophan" evidence="1">
    <location>
        <position position="509"/>
    </location>
</feature>
<feature type="glycosylation site" description="N-linked (GlcNAc...) asparagine" evidence="2">
    <location>
        <position position="754"/>
    </location>
</feature>
<feature type="disulfide bond" evidence="1">
    <location>
        <begin position="28"/>
        <end position="63"/>
    </location>
</feature>
<feature type="disulfide bond" evidence="1">
    <location>
        <begin position="39"/>
        <end position="73"/>
    </location>
</feature>
<feature type="disulfide bond" evidence="1">
    <location>
        <begin position="42"/>
        <end position="79"/>
    </location>
</feature>
<feature type="disulfide bond" evidence="1">
    <location>
        <begin position="85"/>
        <end position="96"/>
    </location>
</feature>
<feature type="disulfide bond" evidence="1">
    <location>
        <begin position="91"/>
        <end position="109"/>
    </location>
</feature>
<feature type="disulfide bond" evidence="1">
    <location>
        <begin position="103"/>
        <end position="119"/>
    </location>
</feature>
<feature type="disulfide bond" evidence="1">
    <location>
        <begin position="128"/>
        <end position="165"/>
    </location>
</feature>
<feature type="disulfide bond" evidence="1">
    <location>
        <begin position="337"/>
        <end position="353"/>
    </location>
</feature>
<feature type="disulfide bond" evidence="1">
    <location>
        <begin position="433"/>
        <end position="560"/>
    </location>
</feature>
<feature type="disulfide bond" evidence="1">
    <location>
        <begin position="455"/>
        <end position="505"/>
    </location>
</feature>
<feature type="disulfide bond" evidence="1">
    <location>
        <begin position="457"/>
        <end position="473"/>
    </location>
</feature>
<feature type="disulfide bond" evidence="1">
    <location>
        <begin position="460"/>
        <end position="475"/>
    </location>
</feature>
<feature type="disulfide bond" evidence="1">
    <location>
        <begin position="477"/>
        <end position="486"/>
    </location>
</feature>
<feature type="disulfide bond" evidence="1">
    <location>
        <begin position="512"/>
        <end position="545"/>
    </location>
</feature>
<feature type="disulfide bond" evidence="1">
    <location>
        <begin position="523"/>
        <end position="535"/>
    </location>
</feature>
<feature type="disulfide bond" evidence="1">
    <location>
        <begin position="571"/>
        <end position="613"/>
    </location>
</feature>
<feature type="disulfide bond" evidence="1">
    <location>
        <begin position="599"/>
        <end position="626"/>
    </location>
</feature>
<feature type="disulfide bond" evidence="1">
    <location>
        <begin position="631"/>
        <end position="673"/>
    </location>
</feature>
<feature type="disulfide bond" evidence="1">
    <location>
        <begin position="659"/>
        <end position="688"/>
    </location>
</feature>
<feature type="disulfide bond" evidence="1">
    <location>
        <begin position="702"/>
        <end position="713"/>
    </location>
</feature>
<feature type="disulfide bond" evidence="1">
    <location>
        <begin position="715"/>
        <end position="750"/>
    </location>
</feature>
<feature type="disulfide bond" evidence="1">
    <location>
        <begin position="721"/>
        <end position="743"/>
    </location>
</feature>
<feature type="disulfide bond" evidence="1">
    <location>
        <begin position="728"/>
        <end position="763"/>
    </location>
</feature>
<feature type="disulfide bond" evidence="1">
    <location>
        <begin position="773"/>
        <end position="782"/>
    </location>
</feature>
<feature type="disulfide bond" evidence="1">
    <location>
        <begin position="776"/>
        <end position="789"/>
    </location>
</feature>
<feature type="disulfide bond" evidence="1">
    <location>
        <begin position="791"/>
        <end position="825"/>
    </location>
</feature>
<feature type="disulfide bond" evidence="1">
    <location>
        <begin position="797"/>
        <end position="818"/>
    </location>
</feature>
<feature type="disulfide bond" evidence="1">
    <location>
        <begin position="805"/>
        <end position="838"/>
    </location>
</feature>
<name>CO7_PIG</name>
<reference key="1">
    <citation type="journal article" date="2000" name="J. Immunol.">
        <title>Isolation, characterization, and cloning of porcine complement component C7.</title>
        <authorList>
            <person name="Agah A."/>
            <person name="Montalto M.C."/>
            <person name="Kiesecker C.L."/>
            <person name="Morrissey M."/>
            <person name="Grover M."/>
            <person name="Whoolery K.L."/>
            <person name="Rother R.P."/>
            <person name="Stahl G.L."/>
        </authorList>
    </citation>
    <scope>NUCLEOTIDE SEQUENCE [MRNA]</scope>
    <scope>PROTEIN SEQUENCE OF 640-651</scope>
    <scope>FUNCTION</scope>
    <scope>SUBCELLULAR LOCATION</scope>
    <scope>TISSUE SPECIFICITY</scope>
    <source>
        <tissue>Lung</tissue>
    </source>
</reference>
<evidence type="ECO:0000250" key="1">
    <source>
        <dbReference type="UniProtKB" id="P10643"/>
    </source>
</evidence>
<evidence type="ECO:0000255" key="2"/>
<evidence type="ECO:0000255" key="3">
    <source>
        <dbReference type="PROSITE-ProRule" id="PRU00124"/>
    </source>
</evidence>
<evidence type="ECO:0000255" key="4">
    <source>
        <dbReference type="PROSITE-ProRule" id="PRU00210"/>
    </source>
</evidence>
<evidence type="ECO:0000255" key="5">
    <source>
        <dbReference type="PROSITE-ProRule" id="PRU00302"/>
    </source>
</evidence>
<evidence type="ECO:0000255" key="6">
    <source>
        <dbReference type="PROSITE-ProRule" id="PRU00745"/>
    </source>
</evidence>
<evidence type="ECO:0000256" key="7">
    <source>
        <dbReference type="SAM" id="MobiDB-lite"/>
    </source>
</evidence>
<evidence type="ECO:0000269" key="8">
    <source>
    </source>
</evidence>
<evidence type="ECO:0000305" key="9"/>
<keyword id="KW-0179">Complement alternate pathway</keyword>
<keyword id="KW-0180">Complement pathway</keyword>
<keyword id="KW-0204">Cytolysis</keyword>
<keyword id="KW-0903">Direct protein sequencing</keyword>
<keyword id="KW-1015">Disulfide bond</keyword>
<keyword id="KW-0245">EGF-like domain</keyword>
<keyword id="KW-0325">Glycoprotein</keyword>
<keyword id="KW-0391">Immunity</keyword>
<keyword id="KW-0399">Innate immunity</keyword>
<keyword id="KW-0472">Membrane</keyword>
<keyword id="KW-0473">Membrane attack complex</keyword>
<keyword id="KW-1185">Reference proteome</keyword>
<keyword id="KW-0677">Repeat</keyword>
<keyword id="KW-0964">Secreted</keyword>
<keyword id="KW-0732">Signal</keyword>
<keyword id="KW-0768">Sushi</keyword>
<keyword id="KW-1052">Target cell membrane</keyword>
<keyword id="KW-1053">Target membrane</keyword>
<proteinExistence type="evidence at protein level"/>
<comment type="function">
    <text evidence="1 8">Component of the membrane attack complex (MAC), a multiprotein complex activated by the complement cascade, which inserts into a target cell membrane and forms a pore, leading to target cell membrane rupture and cell lysis (PubMed:10878384). The MAC is initiated by proteolytic cleavage of C5 into complement C5b in response to the classical, alternative, lectin and GZMK complement pathways. The complement pathways consist in a cascade of proteins that leads to phagocytosis and breakdown of pathogens and signaling that strengthens the adaptive immune system. C7 serves as a membrane anchor. During MAC assembly, associates with C5b and C6 to form the C5b-7 complex, a key lipophilic precursor of the MAC complex, which associates with the outer leaflet and reduces the energy for membrane bending (By similarity).</text>
</comment>
<comment type="activity regulation">
    <text evidence="1">Membrane attack complex (MAC) assembly is inhibited by CD59, thereby protecting self-cells from damage during complement activation. MAC assembly is also inhibited by clusterin (CLU) chaperones that inhibit polymerization of C9.</text>
</comment>
<comment type="subunit">
    <text evidence="1">Monomer or dimer; as a C5b-7 complex it can also form multimeric rosettes. Component of the membrane attack complex (MAC), composed of complement C5b, C6, C7, C8A, C8B, C8G and multiple copies of the pore-forming subunit C9.</text>
</comment>
<comment type="subcellular location">
    <subcellularLocation>
        <location evidence="8">Secreted</location>
    </subcellularLocation>
    <subcellularLocation>
        <location evidence="1">Target cell membrane</location>
    </subcellularLocation>
    <text evidence="1">Secreted as soluble protein. Inserts into the cell membrane of target cells.</text>
</comment>
<comment type="tissue specificity">
    <text evidence="8">Detected in plasma (at protein level). Bone marrow, heart, intestine, lung, spleen, kidney, liver and thymus.</text>
</comment>
<comment type="PTM">
    <text evidence="1">C-, N- and O-glycosylated. O-glycosylated with core 1 or possibly core 8 glycans.</text>
</comment>
<comment type="similarity">
    <text evidence="9">Belongs to the complement C6/C7/C8/C9 family.</text>
</comment>
<sequence>MKAMSLVFLVGLIGEFQVFSSASSPVNCQWDSYAPWSECNGCTKTQTRRRPVAVYGQYGGHPCVGSTFETQSCEPTRGCPTEEGCGERFRCFSGQCISKSLVCNGDSDCEEDSADEDRCEDSESRPSCDLSKPPPNIELTGNGYNALTGQFRNRVLNTKSFGGQCRKVFSGDGRDFYRLSGNVLSYTFQVKVNNDFNYEFYNSTWSYAKHTSTEHTSSSKGRVFIFSSSSSSSSYYAKTYEILKKKSYQLLVVQNTVEVAQFINNNPEFLQLAESFWKELSYLPPLYDYSAYRRLIDQYGTHYLQSGSLGGEYKVLFYVDSEKVAESDLGSEDKKKCASSHISFLFKSSKHKCKAMEEALKSASGTQSNVLRGVPFVRGGRPGFVSGLSYLELDNPDGNKQRYSSWAGSVTDLPQVIKQKLTPLYELVKEVPCASVKRLYLKRALEEYLDEFDSCHCQPCQNGGMASVEGTQCQCHCKPNTFGVACEQGVLVGDHAGGIDGGWSCWSSWGPCAQGKKTRSRKCNNPPPSGGGKSCIGETSESRQCEDEDLEHLRLLEPHCFPLSLVPTEFCPSPPALKDGFVQNEETTFPVGKNIVYSCNEGYSLVGDPVARCGEDLQWTVGKMHCQKIACVLPTLMRGLQSHPQKPFYTVGEKVTFSCSSGMSLEGPSTFLCGSSLKWSPEMKNVQCVRKEAPLAKKVPECQLWEKLQNSKCVCKMPYECGSSLDVCARDERSKRILRLTVCKMHVLQCQGRNYTLSVGETCTLPGSAEKACGACPLWEKCDAQSSKCVCRAASECEEAGFRVCVEVNGREQTMTECEAGVLRCLGLSITVTSIRPCAPEAP</sequence>
<dbReference type="EMBL" id="AF162274">
    <property type="protein sequence ID" value="AAD45918.1"/>
    <property type="molecule type" value="mRNA"/>
</dbReference>
<dbReference type="RefSeq" id="NP_999447.1">
    <property type="nucleotide sequence ID" value="NM_214282.1"/>
</dbReference>
<dbReference type="SMR" id="Q9TUQ3"/>
<dbReference type="FunCoup" id="Q9TUQ3">
    <property type="interactions" value="81"/>
</dbReference>
<dbReference type="STRING" id="9823.ENSSSCP00000017865"/>
<dbReference type="GlyCosmos" id="Q9TUQ3">
    <property type="glycosylation" value="6 sites, No reported glycans"/>
</dbReference>
<dbReference type="GlyGen" id="Q9TUQ3">
    <property type="glycosylation" value="6 sites"/>
</dbReference>
<dbReference type="PaxDb" id="9823-ENSSSCP00000017865"/>
<dbReference type="PeptideAtlas" id="Q9TUQ3"/>
<dbReference type="GeneID" id="397526"/>
<dbReference type="KEGG" id="ssc:397526"/>
<dbReference type="CTD" id="730"/>
<dbReference type="eggNOG" id="ENOG502QU3G">
    <property type="taxonomic scope" value="Eukaryota"/>
</dbReference>
<dbReference type="InParanoid" id="Q9TUQ3"/>
<dbReference type="OrthoDB" id="504708at2759"/>
<dbReference type="Proteomes" id="UP000008227">
    <property type="component" value="Unplaced"/>
</dbReference>
<dbReference type="Proteomes" id="UP000314985">
    <property type="component" value="Unplaced"/>
</dbReference>
<dbReference type="Proteomes" id="UP000694570">
    <property type="component" value="Unplaced"/>
</dbReference>
<dbReference type="Proteomes" id="UP000694571">
    <property type="component" value="Unplaced"/>
</dbReference>
<dbReference type="Proteomes" id="UP000694720">
    <property type="component" value="Unplaced"/>
</dbReference>
<dbReference type="Proteomes" id="UP000694722">
    <property type="component" value="Unplaced"/>
</dbReference>
<dbReference type="Proteomes" id="UP000694723">
    <property type="component" value="Unplaced"/>
</dbReference>
<dbReference type="Proteomes" id="UP000694724">
    <property type="component" value="Unplaced"/>
</dbReference>
<dbReference type="Proteomes" id="UP000694725">
    <property type="component" value="Unplaced"/>
</dbReference>
<dbReference type="Proteomes" id="UP000694726">
    <property type="component" value="Unplaced"/>
</dbReference>
<dbReference type="Proteomes" id="UP000694727">
    <property type="component" value="Unplaced"/>
</dbReference>
<dbReference type="Proteomes" id="UP000694728">
    <property type="component" value="Unplaced"/>
</dbReference>
<dbReference type="GO" id="GO:0005615">
    <property type="term" value="C:extracellular space"/>
    <property type="evidence" value="ECO:0000318"/>
    <property type="project" value="GO_Central"/>
</dbReference>
<dbReference type="GO" id="GO:0005579">
    <property type="term" value="C:membrane attack complex"/>
    <property type="evidence" value="ECO:0000318"/>
    <property type="project" value="GO_Central"/>
</dbReference>
<dbReference type="GO" id="GO:0006956">
    <property type="term" value="P:complement activation"/>
    <property type="evidence" value="ECO:0000318"/>
    <property type="project" value="GO_Central"/>
</dbReference>
<dbReference type="GO" id="GO:0006957">
    <property type="term" value="P:complement activation, alternative pathway"/>
    <property type="evidence" value="ECO:0007669"/>
    <property type="project" value="UniProtKB-KW"/>
</dbReference>
<dbReference type="GO" id="GO:0006958">
    <property type="term" value="P:complement activation, classical pathway"/>
    <property type="evidence" value="ECO:0007669"/>
    <property type="project" value="UniProtKB-KW"/>
</dbReference>
<dbReference type="GO" id="GO:0031640">
    <property type="term" value="P:killing of cells of another organism"/>
    <property type="evidence" value="ECO:0007669"/>
    <property type="project" value="UniProtKB-KW"/>
</dbReference>
<dbReference type="CDD" id="cd00033">
    <property type="entry name" value="CCP"/>
    <property type="match status" value="2"/>
</dbReference>
<dbReference type="CDD" id="cd00112">
    <property type="entry name" value="LDLa"/>
    <property type="match status" value="1"/>
</dbReference>
<dbReference type="FunFam" id="2.10.70.10:FF:000075">
    <property type="entry name" value="Complement component C7"/>
    <property type="match status" value="1"/>
</dbReference>
<dbReference type="FunFam" id="4.10.400.10:FF:000099">
    <property type="entry name" value="Complement component C7"/>
    <property type="match status" value="1"/>
</dbReference>
<dbReference type="FunFam" id="2.20.100.10:FF:000001">
    <property type="entry name" value="semaphorin-5A isoform X1"/>
    <property type="match status" value="1"/>
</dbReference>
<dbReference type="Gene3D" id="3.30.60.30">
    <property type="match status" value="2"/>
</dbReference>
<dbReference type="Gene3D" id="2.10.70.10">
    <property type="entry name" value="Complement Module, domain 1"/>
    <property type="match status" value="2"/>
</dbReference>
<dbReference type="Gene3D" id="4.10.400.10">
    <property type="entry name" value="Low-density Lipoprotein Receptor"/>
    <property type="match status" value="1"/>
</dbReference>
<dbReference type="Gene3D" id="2.20.100.10">
    <property type="entry name" value="Thrombospondin type-1 (TSP1) repeat"/>
    <property type="match status" value="2"/>
</dbReference>
<dbReference type="InterPro" id="IPR048827">
    <property type="entry name" value="C7_FIM2_N"/>
</dbReference>
<dbReference type="InterPro" id="IPR048825">
    <property type="entry name" value="C7_KAZAL"/>
</dbReference>
<dbReference type="InterPro" id="IPR003884">
    <property type="entry name" value="FacI_MAC"/>
</dbReference>
<dbReference type="InterPro" id="IPR040729">
    <property type="entry name" value="Kazal_3"/>
</dbReference>
<dbReference type="InterPro" id="IPR036055">
    <property type="entry name" value="LDL_receptor-like_sf"/>
</dbReference>
<dbReference type="InterPro" id="IPR023415">
    <property type="entry name" value="LDLR_class-A_CS"/>
</dbReference>
<dbReference type="InterPro" id="IPR002172">
    <property type="entry name" value="LDrepeatLR_classA_rpt"/>
</dbReference>
<dbReference type="InterPro" id="IPR001862">
    <property type="entry name" value="MAC_perforin"/>
</dbReference>
<dbReference type="InterPro" id="IPR020864">
    <property type="entry name" value="MACPF"/>
</dbReference>
<dbReference type="InterPro" id="IPR020863">
    <property type="entry name" value="MACPF_CS"/>
</dbReference>
<dbReference type="InterPro" id="IPR035976">
    <property type="entry name" value="Sushi/SCR/CCP_sf"/>
</dbReference>
<dbReference type="InterPro" id="IPR000436">
    <property type="entry name" value="Sushi_SCR_CCP_dom"/>
</dbReference>
<dbReference type="InterPro" id="IPR000884">
    <property type="entry name" value="TSP1_rpt"/>
</dbReference>
<dbReference type="InterPro" id="IPR036383">
    <property type="entry name" value="TSP1_rpt_sf"/>
</dbReference>
<dbReference type="PANTHER" id="PTHR45742">
    <property type="entry name" value="COMPLEMENT COMPONENT C6"/>
    <property type="match status" value="1"/>
</dbReference>
<dbReference type="PANTHER" id="PTHR45742:SF2">
    <property type="entry name" value="COMPLEMENT COMPONENT C7"/>
    <property type="match status" value="1"/>
</dbReference>
<dbReference type="Pfam" id="PF21284">
    <property type="entry name" value="C7_FIM2_N"/>
    <property type="match status" value="1"/>
</dbReference>
<dbReference type="Pfam" id="PF18434">
    <property type="entry name" value="Kazal_3"/>
    <property type="match status" value="1"/>
</dbReference>
<dbReference type="Pfam" id="PF21330">
    <property type="entry name" value="Kazal_C7"/>
    <property type="match status" value="1"/>
</dbReference>
<dbReference type="Pfam" id="PF00057">
    <property type="entry name" value="Ldl_recept_a"/>
    <property type="match status" value="1"/>
</dbReference>
<dbReference type="Pfam" id="PF01823">
    <property type="entry name" value="MACPF"/>
    <property type="match status" value="1"/>
</dbReference>
<dbReference type="Pfam" id="PF00084">
    <property type="entry name" value="Sushi"/>
    <property type="match status" value="2"/>
</dbReference>
<dbReference type="Pfam" id="PF00090">
    <property type="entry name" value="TSP_1"/>
    <property type="match status" value="2"/>
</dbReference>
<dbReference type="PRINTS" id="PR00764">
    <property type="entry name" value="COMPLEMENTC9"/>
</dbReference>
<dbReference type="PRINTS" id="PR01705">
    <property type="entry name" value="TSP1REPEAT"/>
</dbReference>
<dbReference type="SMART" id="SM00032">
    <property type="entry name" value="CCP"/>
    <property type="match status" value="2"/>
</dbReference>
<dbReference type="SMART" id="SM00057">
    <property type="entry name" value="FIMAC"/>
    <property type="match status" value="2"/>
</dbReference>
<dbReference type="SMART" id="SM00192">
    <property type="entry name" value="LDLa"/>
    <property type="match status" value="1"/>
</dbReference>
<dbReference type="SMART" id="SM00457">
    <property type="entry name" value="MACPF"/>
    <property type="match status" value="1"/>
</dbReference>
<dbReference type="SMART" id="SM00209">
    <property type="entry name" value="TSP1"/>
    <property type="match status" value="2"/>
</dbReference>
<dbReference type="SUPFAM" id="SSF57535">
    <property type="entry name" value="Complement control module/SCR domain"/>
    <property type="match status" value="2"/>
</dbReference>
<dbReference type="SUPFAM" id="SSF57424">
    <property type="entry name" value="LDL receptor-like module"/>
    <property type="match status" value="1"/>
</dbReference>
<dbReference type="SUPFAM" id="SSF82895">
    <property type="entry name" value="TSP-1 type 1 repeat"/>
    <property type="match status" value="2"/>
</dbReference>
<dbReference type="PROSITE" id="PS00022">
    <property type="entry name" value="EGF_1"/>
    <property type="match status" value="1"/>
</dbReference>
<dbReference type="PROSITE" id="PS01186">
    <property type="entry name" value="EGF_2"/>
    <property type="match status" value="1"/>
</dbReference>
<dbReference type="PROSITE" id="PS01209">
    <property type="entry name" value="LDLRA_1"/>
    <property type="match status" value="1"/>
</dbReference>
<dbReference type="PROSITE" id="PS50068">
    <property type="entry name" value="LDLRA_2"/>
    <property type="match status" value="1"/>
</dbReference>
<dbReference type="PROSITE" id="PS00279">
    <property type="entry name" value="MACPF_1"/>
    <property type="match status" value="1"/>
</dbReference>
<dbReference type="PROSITE" id="PS51412">
    <property type="entry name" value="MACPF_2"/>
    <property type="match status" value="1"/>
</dbReference>
<dbReference type="PROSITE" id="PS50923">
    <property type="entry name" value="SUSHI"/>
    <property type="match status" value="2"/>
</dbReference>
<dbReference type="PROSITE" id="PS50092">
    <property type="entry name" value="TSP1"/>
    <property type="match status" value="2"/>
</dbReference>
<gene>
    <name type="primary">C7</name>
</gene>
<organism>
    <name type="scientific">Sus scrofa</name>
    <name type="common">Pig</name>
    <dbReference type="NCBI Taxonomy" id="9823"/>
    <lineage>
        <taxon>Eukaryota</taxon>
        <taxon>Metazoa</taxon>
        <taxon>Chordata</taxon>
        <taxon>Craniata</taxon>
        <taxon>Vertebrata</taxon>
        <taxon>Euteleostomi</taxon>
        <taxon>Mammalia</taxon>
        <taxon>Eutheria</taxon>
        <taxon>Laurasiatheria</taxon>
        <taxon>Artiodactyla</taxon>
        <taxon>Suina</taxon>
        <taxon>Suidae</taxon>
        <taxon>Sus</taxon>
    </lineage>
</organism>
<protein>
    <recommendedName>
        <fullName>Complement component C7</fullName>
    </recommendedName>
</protein>
<accession>Q9TUQ3</accession>